<sequence>MGKGLLGKRVAIGGSRKTEEISTIIEKQGGIPVIRPLQGTVYLAEKQVEPDLRTFAEEKADWVIFTTGIGLETLVDMAEKIGLKDEFLQAIRQAKAACRGYKTLSALKKLGITPEASDEDGTTRGLIRSLEPHDFSGKTVMVQLHGEKAPALMAFLEEKGASVLPILPYQHIPPEEETVERLCRELMNDEVDAVCFTTAIQVRSLFDFAKGRGYINEVKKVFEERAIAAAVGKVTAEALREEGITRLLAPEIERMGAMIVELAKYYEEKE</sequence>
<name>YJJA_BACSU</name>
<feature type="chain" id="PRO_0000388345" description="Uncharacterized protein YjjA">
    <location>
        <begin position="1"/>
        <end position="270"/>
    </location>
</feature>
<reference key="1">
    <citation type="journal article" date="1998" name="Microbiology">
        <title>A 35.7 kb DNA fragment from the Bacillus subtilis chromosome containing a putative 12.3 kb operon involved in hexuronate catabolism and a perfectly symmetrical hypothetical catabolite-responsive element.</title>
        <authorList>
            <person name="Rivolta C."/>
            <person name="Soldo B."/>
            <person name="Lazarevic V."/>
            <person name="Joris B."/>
            <person name="Mauel C."/>
            <person name="Karamata D."/>
        </authorList>
    </citation>
    <scope>NUCLEOTIDE SEQUENCE [GENOMIC DNA]</scope>
    <source>
        <strain>168</strain>
    </source>
</reference>
<reference key="2">
    <citation type="journal article" date="1997" name="Nature">
        <title>The complete genome sequence of the Gram-positive bacterium Bacillus subtilis.</title>
        <authorList>
            <person name="Kunst F."/>
            <person name="Ogasawara N."/>
            <person name="Moszer I."/>
            <person name="Albertini A.M."/>
            <person name="Alloni G."/>
            <person name="Azevedo V."/>
            <person name="Bertero M.G."/>
            <person name="Bessieres P."/>
            <person name="Bolotin A."/>
            <person name="Borchert S."/>
            <person name="Borriss R."/>
            <person name="Boursier L."/>
            <person name="Brans A."/>
            <person name="Braun M."/>
            <person name="Brignell S.C."/>
            <person name="Bron S."/>
            <person name="Brouillet S."/>
            <person name="Bruschi C.V."/>
            <person name="Caldwell B."/>
            <person name="Capuano V."/>
            <person name="Carter N.M."/>
            <person name="Choi S.-K."/>
            <person name="Codani J.-J."/>
            <person name="Connerton I.F."/>
            <person name="Cummings N.J."/>
            <person name="Daniel R.A."/>
            <person name="Denizot F."/>
            <person name="Devine K.M."/>
            <person name="Duesterhoeft A."/>
            <person name="Ehrlich S.D."/>
            <person name="Emmerson P.T."/>
            <person name="Entian K.-D."/>
            <person name="Errington J."/>
            <person name="Fabret C."/>
            <person name="Ferrari E."/>
            <person name="Foulger D."/>
            <person name="Fritz C."/>
            <person name="Fujita M."/>
            <person name="Fujita Y."/>
            <person name="Fuma S."/>
            <person name="Galizzi A."/>
            <person name="Galleron N."/>
            <person name="Ghim S.-Y."/>
            <person name="Glaser P."/>
            <person name="Goffeau A."/>
            <person name="Golightly E.J."/>
            <person name="Grandi G."/>
            <person name="Guiseppi G."/>
            <person name="Guy B.J."/>
            <person name="Haga K."/>
            <person name="Haiech J."/>
            <person name="Harwood C.R."/>
            <person name="Henaut A."/>
            <person name="Hilbert H."/>
            <person name="Holsappel S."/>
            <person name="Hosono S."/>
            <person name="Hullo M.-F."/>
            <person name="Itaya M."/>
            <person name="Jones L.-M."/>
            <person name="Joris B."/>
            <person name="Karamata D."/>
            <person name="Kasahara Y."/>
            <person name="Klaerr-Blanchard M."/>
            <person name="Klein C."/>
            <person name="Kobayashi Y."/>
            <person name="Koetter P."/>
            <person name="Koningstein G."/>
            <person name="Krogh S."/>
            <person name="Kumano M."/>
            <person name="Kurita K."/>
            <person name="Lapidus A."/>
            <person name="Lardinois S."/>
            <person name="Lauber J."/>
            <person name="Lazarevic V."/>
            <person name="Lee S.-M."/>
            <person name="Levine A."/>
            <person name="Liu H."/>
            <person name="Masuda S."/>
            <person name="Mauel C."/>
            <person name="Medigue C."/>
            <person name="Medina N."/>
            <person name="Mellado R.P."/>
            <person name="Mizuno M."/>
            <person name="Moestl D."/>
            <person name="Nakai S."/>
            <person name="Noback M."/>
            <person name="Noone D."/>
            <person name="O'Reilly M."/>
            <person name="Ogawa K."/>
            <person name="Ogiwara A."/>
            <person name="Oudega B."/>
            <person name="Park S.-H."/>
            <person name="Parro V."/>
            <person name="Pohl T.M."/>
            <person name="Portetelle D."/>
            <person name="Porwollik S."/>
            <person name="Prescott A.M."/>
            <person name="Presecan E."/>
            <person name="Pujic P."/>
            <person name="Purnelle B."/>
            <person name="Rapoport G."/>
            <person name="Rey M."/>
            <person name="Reynolds S."/>
            <person name="Rieger M."/>
            <person name="Rivolta C."/>
            <person name="Rocha E."/>
            <person name="Roche B."/>
            <person name="Rose M."/>
            <person name="Sadaie Y."/>
            <person name="Sato T."/>
            <person name="Scanlan E."/>
            <person name="Schleich S."/>
            <person name="Schroeter R."/>
            <person name="Scoffone F."/>
            <person name="Sekiguchi J."/>
            <person name="Sekowska A."/>
            <person name="Seror S.J."/>
            <person name="Serror P."/>
            <person name="Shin B.-S."/>
            <person name="Soldo B."/>
            <person name="Sorokin A."/>
            <person name="Tacconi E."/>
            <person name="Takagi T."/>
            <person name="Takahashi H."/>
            <person name="Takemaru K."/>
            <person name="Takeuchi M."/>
            <person name="Tamakoshi A."/>
            <person name="Tanaka T."/>
            <person name="Terpstra P."/>
            <person name="Tognoni A."/>
            <person name="Tosato V."/>
            <person name="Uchiyama S."/>
            <person name="Vandenbol M."/>
            <person name="Vannier F."/>
            <person name="Vassarotti A."/>
            <person name="Viari A."/>
            <person name="Wambutt R."/>
            <person name="Wedler E."/>
            <person name="Wedler H."/>
            <person name="Weitzenegger T."/>
            <person name="Winters P."/>
            <person name="Wipat A."/>
            <person name="Yamamoto H."/>
            <person name="Yamane K."/>
            <person name="Yasumoto K."/>
            <person name="Yata K."/>
            <person name="Yoshida K."/>
            <person name="Yoshikawa H.-F."/>
            <person name="Zumstein E."/>
            <person name="Yoshikawa H."/>
            <person name="Danchin A."/>
        </authorList>
    </citation>
    <scope>NUCLEOTIDE SEQUENCE [LARGE SCALE GENOMIC DNA]</scope>
    <source>
        <strain>168</strain>
    </source>
</reference>
<accession>O34394</accession>
<accession>Q796N6</accession>
<organism>
    <name type="scientific">Bacillus subtilis (strain 168)</name>
    <dbReference type="NCBI Taxonomy" id="224308"/>
    <lineage>
        <taxon>Bacteria</taxon>
        <taxon>Bacillati</taxon>
        <taxon>Bacillota</taxon>
        <taxon>Bacilli</taxon>
        <taxon>Bacillales</taxon>
        <taxon>Bacillaceae</taxon>
        <taxon>Bacillus</taxon>
    </lineage>
</organism>
<gene>
    <name type="primary">yjjA</name>
    <name type="ordered locus">BSU12230</name>
</gene>
<keyword id="KW-1185">Reference proteome</keyword>
<protein>
    <recommendedName>
        <fullName>Uncharacterized protein YjjA</fullName>
    </recommendedName>
</protein>
<proteinExistence type="predicted"/>
<dbReference type="EMBL" id="AF015825">
    <property type="protein sequence ID" value="AAC46319.1"/>
    <property type="molecule type" value="Genomic_DNA"/>
</dbReference>
<dbReference type="EMBL" id="AL009126">
    <property type="protein sequence ID" value="CAB13080.1"/>
    <property type="molecule type" value="Genomic_DNA"/>
</dbReference>
<dbReference type="PIR" id="D69851">
    <property type="entry name" value="D69851"/>
</dbReference>
<dbReference type="RefSeq" id="NP_389105.1">
    <property type="nucleotide sequence ID" value="NC_000964.3"/>
</dbReference>
<dbReference type="RefSeq" id="WP_003245334.1">
    <property type="nucleotide sequence ID" value="NZ_OZ025638.1"/>
</dbReference>
<dbReference type="SMR" id="O34394"/>
<dbReference type="FunCoup" id="O34394">
    <property type="interactions" value="216"/>
</dbReference>
<dbReference type="STRING" id="224308.BSU12230"/>
<dbReference type="PaxDb" id="224308-BSU12230"/>
<dbReference type="EnsemblBacteria" id="CAB13080">
    <property type="protein sequence ID" value="CAB13080"/>
    <property type="gene ID" value="BSU_12230"/>
</dbReference>
<dbReference type="GeneID" id="939823"/>
<dbReference type="KEGG" id="bsu:BSU12230"/>
<dbReference type="PATRIC" id="fig|224308.179.peg.1322"/>
<dbReference type="eggNOG" id="COG1587">
    <property type="taxonomic scope" value="Bacteria"/>
</dbReference>
<dbReference type="InParanoid" id="O34394"/>
<dbReference type="OrthoDB" id="9775656at2"/>
<dbReference type="PhylomeDB" id="O34394"/>
<dbReference type="BioCyc" id="BSUB:BSU12230-MONOMER"/>
<dbReference type="Proteomes" id="UP000001570">
    <property type="component" value="Chromosome"/>
</dbReference>
<dbReference type="GO" id="GO:0004852">
    <property type="term" value="F:uroporphyrinogen-III synthase activity"/>
    <property type="evidence" value="ECO:0007669"/>
    <property type="project" value="InterPro"/>
</dbReference>
<dbReference type="GO" id="GO:0006780">
    <property type="term" value="P:uroporphyrinogen III biosynthetic process"/>
    <property type="evidence" value="ECO:0007669"/>
    <property type="project" value="InterPro"/>
</dbReference>
<dbReference type="CDD" id="cd06578">
    <property type="entry name" value="HemD"/>
    <property type="match status" value="1"/>
</dbReference>
<dbReference type="Gene3D" id="3.40.50.10090">
    <property type="match status" value="2"/>
</dbReference>
<dbReference type="InterPro" id="IPR036108">
    <property type="entry name" value="4pyrrol_syn_uPrphyn_synt_sf"/>
</dbReference>
<dbReference type="InterPro" id="IPR003754">
    <property type="entry name" value="4pyrrol_synth_uPrphyn_synth"/>
</dbReference>
<dbReference type="InterPro" id="IPR039793">
    <property type="entry name" value="UROS/Hem4"/>
</dbReference>
<dbReference type="NCBIfam" id="NF004584">
    <property type="entry name" value="PRK05928.2-1"/>
    <property type="match status" value="1"/>
</dbReference>
<dbReference type="PANTHER" id="PTHR40082">
    <property type="entry name" value="BLR5956 PROTEIN"/>
    <property type="match status" value="1"/>
</dbReference>
<dbReference type="PANTHER" id="PTHR40082:SF1">
    <property type="entry name" value="BLR5956 PROTEIN"/>
    <property type="match status" value="1"/>
</dbReference>
<dbReference type="Pfam" id="PF02602">
    <property type="entry name" value="HEM4"/>
    <property type="match status" value="1"/>
</dbReference>
<dbReference type="SUPFAM" id="SSF69618">
    <property type="entry name" value="HemD-like"/>
    <property type="match status" value="1"/>
</dbReference>